<organism>
    <name type="scientific">Bifidobacterium longum (strain DJO10A)</name>
    <dbReference type="NCBI Taxonomy" id="205913"/>
    <lineage>
        <taxon>Bacteria</taxon>
        <taxon>Bacillati</taxon>
        <taxon>Actinomycetota</taxon>
        <taxon>Actinomycetes</taxon>
        <taxon>Bifidobacteriales</taxon>
        <taxon>Bifidobacteriaceae</taxon>
        <taxon>Bifidobacterium</taxon>
    </lineage>
</organism>
<keyword id="KW-0687">Ribonucleoprotein</keyword>
<keyword id="KW-0689">Ribosomal protein</keyword>
<keyword id="KW-0694">RNA-binding</keyword>
<keyword id="KW-0699">rRNA-binding</keyword>
<dbReference type="EMBL" id="CP000605">
    <property type="protein sequence ID" value="ACD99158.1"/>
    <property type="molecule type" value="Genomic_DNA"/>
</dbReference>
<dbReference type="RefSeq" id="WP_007053036.1">
    <property type="nucleotide sequence ID" value="NZ_AABM02000025.1"/>
</dbReference>
<dbReference type="SMR" id="B3DQC0"/>
<dbReference type="GeneID" id="69578891"/>
<dbReference type="KEGG" id="blj:BLD_1713"/>
<dbReference type="HOGENOM" id="CLU_058591_0_2_11"/>
<dbReference type="Proteomes" id="UP000002419">
    <property type="component" value="Chromosome"/>
</dbReference>
<dbReference type="GO" id="GO:0022627">
    <property type="term" value="C:cytosolic small ribosomal subunit"/>
    <property type="evidence" value="ECO:0007669"/>
    <property type="project" value="TreeGrafter"/>
</dbReference>
<dbReference type="GO" id="GO:0003729">
    <property type="term" value="F:mRNA binding"/>
    <property type="evidence" value="ECO:0007669"/>
    <property type="project" value="UniProtKB-UniRule"/>
</dbReference>
<dbReference type="GO" id="GO:0019843">
    <property type="term" value="F:rRNA binding"/>
    <property type="evidence" value="ECO:0007669"/>
    <property type="project" value="UniProtKB-UniRule"/>
</dbReference>
<dbReference type="GO" id="GO:0003735">
    <property type="term" value="F:structural constituent of ribosome"/>
    <property type="evidence" value="ECO:0007669"/>
    <property type="project" value="InterPro"/>
</dbReference>
<dbReference type="GO" id="GO:0006412">
    <property type="term" value="P:translation"/>
    <property type="evidence" value="ECO:0007669"/>
    <property type="project" value="UniProtKB-UniRule"/>
</dbReference>
<dbReference type="CDD" id="cd02412">
    <property type="entry name" value="KH-II_30S_S3"/>
    <property type="match status" value="1"/>
</dbReference>
<dbReference type="FunFam" id="3.30.1140.32:FF:000002">
    <property type="entry name" value="30S ribosomal protein S3"/>
    <property type="match status" value="1"/>
</dbReference>
<dbReference type="FunFam" id="3.30.300.20:FF:000001">
    <property type="entry name" value="30S ribosomal protein S3"/>
    <property type="match status" value="1"/>
</dbReference>
<dbReference type="Gene3D" id="3.30.300.20">
    <property type="match status" value="1"/>
</dbReference>
<dbReference type="Gene3D" id="3.30.1140.32">
    <property type="entry name" value="Ribosomal protein S3, C-terminal domain"/>
    <property type="match status" value="1"/>
</dbReference>
<dbReference type="HAMAP" id="MF_01309_B">
    <property type="entry name" value="Ribosomal_uS3_B"/>
    <property type="match status" value="1"/>
</dbReference>
<dbReference type="InterPro" id="IPR004087">
    <property type="entry name" value="KH_dom"/>
</dbReference>
<dbReference type="InterPro" id="IPR015946">
    <property type="entry name" value="KH_dom-like_a/b"/>
</dbReference>
<dbReference type="InterPro" id="IPR004044">
    <property type="entry name" value="KH_dom_type_2"/>
</dbReference>
<dbReference type="InterPro" id="IPR009019">
    <property type="entry name" value="KH_sf_prok-type"/>
</dbReference>
<dbReference type="InterPro" id="IPR036419">
    <property type="entry name" value="Ribosomal_S3_C_sf"/>
</dbReference>
<dbReference type="InterPro" id="IPR005704">
    <property type="entry name" value="Ribosomal_uS3_bac-typ"/>
</dbReference>
<dbReference type="InterPro" id="IPR001351">
    <property type="entry name" value="Ribosomal_uS3_C"/>
</dbReference>
<dbReference type="InterPro" id="IPR018280">
    <property type="entry name" value="Ribosomal_uS3_CS"/>
</dbReference>
<dbReference type="NCBIfam" id="TIGR01009">
    <property type="entry name" value="rpsC_bact"/>
    <property type="match status" value="1"/>
</dbReference>
<dbReference type="PANTHER" id="PTHR11760">
    <property type="entry name" value="30S/40S RIBOSOMAL PROTEIN S3"/>
    <property type="match status" value="1"/>
</dbReference>
<dbReference type="PANTHER" id="PTHR11760:SF19">
    <property type="entry name" value="SMALL RIBOSOMAL SUBUNIT PROTEIN US3C"/>
    <property type="match status" value="1"/>
</dbReference>
<dbReference type="Pfam" id="PF07650">
    <property type="entry name" value="KH_2"/>
    <property type="match status" value="1"/>
</dbReference>
<dbReference type="Pfam" id="PF00189">
    <property type="entry name" value="Ribosomal_S3_C"/>
    <property type="match status" value="1"/>
</dbReference>
<dbReference type="SMART" id="SM00322">
    <property type="entry name" value="KH"/>
    <property type="match status" value="1"/>
</dbReference>
<dbReference type="SUPFAM" id="SSF54814">
    <property type="entry name" value="Prokaryotic type KH domain (KH-domain type II)"/>
    <property type="match status" value="1"/>
</dbReference>
<dbReference type="SUPFAM" id="SSF54821">
    <property type="entry name" value="Ribosomal protein S3 C-terminal domain"/>
    <property type="match status" value="1"/>
</dbReference>
<dbReference type="PROSITE" id="PS50823">
    <property type="entry name" value="KH_TYPE_2"/>
    <property type="match status" value="1"/>
</dbReference>
<dbReference type="PROSITE" id="PS00548">
    <property type="entry name" value="RIBOSOMAL_S3"/>
    <property type="match status" value="1"/>
</dbReference>
<proteinExistence type="inferred from homology"/>
<reference key="1">
    <citation type="journal article" date="2008" name="BMC Genomics">
        <title>Comparative genomic analysis of the gut bacterium Bifidobacterium longum reveals loci susceptible to deletion during pure culture growth.</title>
        <authorList>
            <person name="Lee J.H."/>
            <person name="Karamychev V.N."/>
            <person name="Kozyavkin S.A."/>
            <person name="Mills D."/>
            <person name="Pavlov A.R."/>
            <person name="Pavlova N.V."/>
            <person name="Polouchine N.N."/>
            <person name="Richardson P.M."/>
            <person name="Shakhova V.V."/>
            <person name="Slesarev A.I."/>
            <person name="Weimer B."/>
            <person name="O'Sullivan D.J."/>
        </authorList>
    </citation>
    <scope>NUCLEOTIDE SEQUENCE [LARGE SCALE GENOMIC DNA]</scope>
    <source>
        <strain>DJO10A</strain>
    </source>
</reference>
<feature type="chain" id="PRO_1000140923" description="Small ribosomal subunit protein uS3">
    <location>
        <begin position="1"/>
        <end position="267"/>
    </location>
</feature>
<feature type="domain" description="KH type-2" evidence="1">
    <location>
        <begin position="43"/>
        <end position="111"/>
    </location>
</feature>
<feature type="region of interest" description="Disordered" evidence="2">
    <location>
        <begin position="216"/>
        <end position="267"/>
    </location>
</feature>
<feature type="compositionally biased region" description="Low complexity" evidence="2">
    <location>
        <begin position="241"/>
        <end position="267"/>
    </location>
</feature>
<protein>
    <recommendedName>
        <fullName evidence="1">Small ribosomal subunit protein uS3</fullName>
    </recommendedName>
    <alternativeName>
        <fullName evidence="3">30S ribosomal protein S3</fullName>
    </alternativeName>
</protein>
<comment type="function">
    <text evidence="1">Binds the lower part of the 30S subunit head. Binds mRNA in the 70S ribosome, positioning it for translation.</text>
</comment>
<comment type="subunit">
    <text evidence="1">Part of the 30S ribosomal subunit. Forms a tight complex with proteins S10 and S14.</text>
</comment>
<comment type="similarity">
    <text evidence="1">Belongs to the universal ribosomal protein uS3 family.</text>
</comment>
<name>RS3_BIFLD</name>
<gene>
    <name evidence="1" type="primary">rpsC</name>
    <name type="ordered locus">BLD_1713</name>
</gene>
<evidence type="ECO:0000255" key="1">
    <source>
        <dbReference type="HAMAP-Rule" id="MF_01309"/>
    </source>
</evidence>
<evidence type="ECO:0000256" key="2">
    <source>
        <dbReference type="SAM" id="MobiDB-lite"/>
    </source>
</evidence>
<evidence type="ECO:0000305" key="3"/>
<accession>B3DQC0</accession>
<sequence>MGQKINPFGYRLGITENHRSKWFSDSNKAGERYRDFVLEDDQIRKEMSKDLERAGVSRIVIERTRDRVRVDIHTARPGIVIGRRGAEAERVRAKLEKLTGKQVQLNIFEVKNAALDAQLVAQGIAEQLTNRVTFRRAMRKAQQDAMRAGAKGIRIKLSGRLGGAEMSRSEFYREGRVPLQTLRALIDYGFFEAKTTYGRIGVKVWIYKGDMTESEFEEQQAQQNNRPGRRGGDRRPRRGNRSAAPQAAEAPKAEAPAEAAPAAETKE</sequence>